<organism>
    <name type="scientific">Neisseria meningitidis serogroup B (strain ATCC BAA-335 / MC58)</name>
    <dbReference type="NCBI Taxonomy" id="122586"/>
    <lineage>
        <taxon>Bacteria</taxon>
        <taxon>Pseudomonadati</taxon>
        <taxon>Pseudomonadota</taxon>
        <taxon>Betaproteobacteria</taxon>
        <taxon>Neisseriales</taxon>
        <taxon>Neisseriaceae</taxon>
        <taxon>Neisseria</taxon>
    </lineage>
</organism>
<accession>Q7DDQ4</accession>
<sequence length="89" mass="10186">MAMNKLNFLLLLAVCVSAFSVVMQQNQYRLNFTALDKAKKQEIALEQDYAQMRLQQARLANHEAIRAAAEKQNLHPPVSGNTFMVEHQR</sequence>
<proteinExistence type="inferred from homology"/>
<dbReference type="EMBL" id="AE002098">
    <property type="protein sequence ID" value="AAF40851.1"/>
    <property type="molecule type" value="Genomic_DNA"/>
</dbReference>
<dbReference type="PIR" id="A81202">
    <property type="entry name" value="A81202"/>
</dbReference>
<dbReference type="RefSeq" id="NP_273461.1">
    <property type="nucleotide sequence ID" value="NC_003112.2"/>
</dbReference>
<dbReference type="SMR" id="Q7DDQ4"/>
<dbReference type="STRING" id="122586.NMB0412"/>
<dbReference type="PaxDb" id="122586-NMB0412"/>
<dbReference type="KEGG" id="nme:NMB0412"/>
<dbReference type="PATRIC" id="fig|122586.8.peg.522"/>
<dbReference type="HOGENOM" id="CLU_156524_0_2_4"/>
<dbReference type="InParanoid" id="Q7DDQ4"/>
<dbReference type="OrthoDB" id="8613384at2"/>
<dbReference type="Proteomes" id="UP000000425">
    <property type="component" value="Chromosome"/>
</dbReference>
<dbReference type="GO" id="GO:0032153">
    <property type="term" value="C:cell division site"/>
    <property type="evidence" value="ECO:0007669"/>
    <property type="project" value="UniProtKB-UniRule"/>
</dbReference>
<dbReference type="GO" id="GO:0005886">
    <property type="term" value="C:plasma membrane"/>
    <property type="evidence" value="ECO:0007669"/>
    <property type="project" value="UniProtKB-SubCell"/>
</dbReference>
<dbReference type="GO" id="GO:0043093">
    <property type="term" value="P:FtsZ-dependent cytokinesis"/>
    <property type="evidence" value="ECO:0007669"/>
    <property type="project" value="UniProtKB-UniRule"/>
</dbReference>
<dbReference type="HAMAP" id="MF_00910">
    <property type="entry name" value="FtsL"/>
    <property type="match status" value="1"/>
</dbReference>
<dbReference type="InterPro" id="IPR011922">
    <property type="entry name" value="Cell_div_FtsL"/>
</dbReference>
<dbReference type="NCBIfam" id="TIGR02209">
    <property type="entry name" value="ftsL_broad"/>
    <property type="match status" value="1"/>
</dbReference>
<dbReference type="Pfam" id="PF04999">
    <property type="entry name" value="FtsL"/>
    <property type="match status" value="1"/>
</dbReference>
<reference key="1">
    <citation type="journal article" date="2000" name="Science">
        <title>Complete genome sequence of Neisseria meningitidis serogroup B strain MC58.</title>
        <authorList>
            <person name="Tettelin H."/>
            <person name="Saunders N.J."/>
            <person name="Heidelberg J.F."/>
            <person name="Jeffries A.C."/>
            <person name="Nelson K.E."/>
            <person name="Eisen J.A."/>
            <person name="Ketchum K.A."/>
            <person name="Hood D.W."/>
            <person name="Peden J.F."/>
            <person name="Dodson R.J."/>
            <person name="Nelson W.C."/>
            <person name="Gwinn M.L."/>
            <person name="DeBoy R.T."/>
            <person name="Peterson J.D."/>
            <person name="Hickey E.K."/>
            <person name="Haft D.H."/>
            <person name="Salzberg S.L."/>
            <person name="White O."/>
            <person name="Fleischmann R.D."/>
            <person name="Dougherty B.A."/>
            <person name="Mason T.M."/>
            <person name="Ciecko A."/>
            <person name="Parksey D.S."/>
            <person name="Blair E."/>
            <person name="Cittone H."/>
            <person name="Clark E.B."/>
            <person name="Cotton M.D."/>
            <person name="Utterback T.R."/>
            <person name="Khouri H.M."/>
            <person name="Qin H."/>
            <person name="Vamathevan J.J."/>
            <person name="Gill J."/>
            <person name="Scarlato V."/>
            <person name="Masignani V."/>
            <person name="Pizza M."/>
            <person name="Grandi G."/>
            <person name="Sun L."/>
            <person name="Smith H.O."/>
            <person name="Fraser C.M."/>
            <person name="Moxon E.R."/>
            <person name="Rappuoli R."/>
            <person name="Venter J.C."/>
        </authorList>
    </citation>
    <scope>NUCLEOTIDE SEQUENCE [LARGE SCALE GENOMIC DNA]</scope>
    <source>
        <strain>ATCC BAA-335 / MC58</strain>
    </source>
</reference>
<evidence type="ECO:0000255" key="1"/>
<evidence type="ECO:0000255" key="2">
    <source>
        <dbReference type="HAMAP-Rule" id="MF_00910"/>
    </source>
</evidence>
<comment type="function">
    <text evidence="2">Essential cell division protein. May link together the upstream cell division proteins, which are predominantly cytoplasmic, with the downstream cell division proteins, which are predominantly periplasmic.</text>
</comment>
<comment type="subunit">
    <text evidence="2">Part of a complex composed of FtsB, FtsL and FtsQ.</text>
</comment>
<comment type="subcellular location">
    <subcellularLocation>
        <location evidence="2">Cell inner membrane</location>
        <topology evidence="2">Single-pass type II membrane protein</topology>
    </subcellularLocation>
    <text evidence="2">Localizes to the division septum where it forms a ring structure.</text>
</comment>
<comment type="similarity">
    <text evidence="2">Belongs to the FtsL family.</text>
</comment>
<keyword id="KW-0131">Cell cycle</keyword>
<keyword id="KW-0132">Cell division</keyword>
<keyword id="KW-0997">Cell inner membrane</keyword>
<keyword id="KW-1003">Cell membrane</keyword>
<keyword id="KW-0175">Coiled coil</keyword>
<keyword id="KW-0472">Membrane</keyword>
<keyword id="KW-1185">Reference proteome</keyword>
<keyword id="KW-0812">Transmembrane</keyword>
<keyword id="KW-1133">Transmembrane helix</keyword>
<feature type="chain" id="PRO_0000414564" description="Cell division protein FtsL">
    <location>
        <begin position="1"/>
        <end position="89"/>
    </location>
</feature>
<feature type="topological domain" description="Cytoplasmic" evidence="2">
    <location>
        <begin position="1"/>
        <end position="6"/>
    </location>
</feature>
<feature type="transmembrane region" description="Helical" evidence="2">
    <location>
        <begin position="7"/>
        <end position="24"/>
    </location>
</feature>
<feature type="topological domain" description="Periplasmic" evidence="2">
    <location>
        <begin position="25"/>
        <end position="89"/>
    </location>
</feature>
<feature type="coiled-coil region" evidence="1">
    <location>
        <begin position="33"/>
        <end position="73"/>
    </location>
</feature>
<name>FTSL_NEIMB</name>
<gene>
    <name evidence="2" type="primary">ftsL</name>
    <name type="ordered locus">NMB0412</name>
</gene>
<protein>
    <recommendedName>
        <fullName evidence="2">Cell division protein FtsL</fullName>
    </recommendedName>
</protein>